<evidence type="ECO:0000250" key="1">
    <source>
        <dbReference type="UniProtKB" id="Q9BQ67"/>
    </source>
</evidence>
<evidence type="ECO:0000256" key="2">
    <source>
        <dbReference type="SAM" id="MobiDB-lite"/>
    </source>
</evidence>
<evidence type="ECO:0000305" key="3"/>
<comment type="function">
    <text evidence="1">Histone binding-protein that regulates chromatin dynamics and minichromosome maintenance (MCM) loading at replication origins, possibly by promoting chromatin openness.</text>
</comment>
<comment type="subunit">
    <text evidence="1">Interacts with METTL18. Interacts with CDT1; origin binding of GRWD1 is dependent on CDT1. Interacts with CDC6; origin binding of GRWD1 is dependent on CDC6. Binds to histone H2A-H2B and H3-H4 complexes.</text>
</comment>
<comment type="subcellular location">
    <subcellularLocation>
        <location evidence="1">Nucleus</location>
        <location evidence="1">Nucleolus</location>
    </subcellularLocation>
    <subcellularLocation>
        <location evidence="1">Nucleus</location>
    </subcellularLocation>
    <subcellularLocation>
        <location evidence="1">Chromosome</location>
    </subcellularLocation>
    <text evidence="1">Present in the nucleus throughout interphase and is detached from chromatin at the onset of mitosis and rebinds at telophase when the pre-replication complexes (pre-RC) is formed (By similarity).</text>
</comment>
<feature type="chain" id="PRO_0000051012" description="Glutamate-rich WD repeat-containing protein 1">
    <location>
        <begin position="1"/>
        <end position="446"/>
    </location>
</feature>
<feature type="repeat" description="WD 1">
    <location>
        <begin position="212"/>
        <end position="252"/>
    </location>
</feature>
<feature type="repeat" description="WD 2">
    <location>
        <begin position="259"/>
        <end position="299"/>
    </location>
</feature>
<feature type="repeat" description="WD 3">
    <location>
        <begin position="306"/>
        <end position="345"/>
    </location>
</feature>
<feature type="repeat" description="WD 4">
    <location>
        <begin position="351"/>
        <end position="391"/>
    </location>
</feature>
<feature type="repeat" description="WD 5">
    <location>
        <begin position="412"/>
        <end position="445"/>
    </location>
</feature>
<feature type="region of interest" description="Disordered" evidence="2">
    <location>
        <begin position="1"/>
        <end position="29"/>
    </location>
</feature>
<feature type="region of interest" description="Disordered" evidence="2">
    <location>
        <begin position="111"/>
        <end position="141"/>
    </location>
</feature>
<feature type="compositionally biased region" description="Acidic residues" evidence="2">
    <location>
        <begin position="121"/>
        <end position="136"/>
    </location>
</feature>
<feature type="modified residue" description="Phosphothreonine" evidence="1">
    <location>
        <position position="10"/>
    </location>
</feature>
<feature type="modified residue" description="Phosphoserine" evidence="1">
    <location>
        <position position="119"/>
    </location>
</feature>
<feature type="modified residue" description="Phosphoserine" evidence="1">
    <location>
        <position position="122"/>
    </location>
</feature>
<feature type="modified residue" description="Phosphoserine" evidence="1">
    <location>
        <position position="344"/>
    </location>
</feature>
<feature type="sequence conflict" description="In Ref. 1; BAC66461." evidence="3" ref="1">
    <original>S</original>
    <variation>P</variation>
    <location>
        <position position="391"/>
    </location>
</feature>
<reference key="1">
    <citation type="submission" date="1997-02" db="EMBL/GenBank/DDBJ databases">
        <title>Isolation of the cDNA encoding a novel WD repeat protein (A301) from mouse brain.</title>
        <authorList>
            <person name="Sakuma-Takagi M."/>
            <person name="Ichimiya T."/>
            <person name="Kurihara T."/>
        </authorList>
    </citation>
    <scope>NUCLEOTIDE SEQUENCE [MRNA]</scope>
    <source>
        <strain>ICR</strain>
        <tissue>Forebrain</tissue>
    </source>
</reference>
<reference key="2">
    <citation type="journal article" date="2009" name="PLoS Biol.">
        <title>Lineage-specific biology revealed by a finished genome assembly of the mouse.</title>
        <authorList>
            <person name="Church D.M."/>
            <person name="Goodstadt L."/>
            <person name="Hillier L.W."/>
            <person name="Zody M.C."/>
            <person name="Goldstein S."/>
            <person name="She X."/>
            <person name="Bult C.J."/>
            <person name="Agarwala R."/>
            <person name="Cherry J.L."/>
            <person name="DiCuccio M."/>
            <person name="Hlavina W."/>
            <person name="Kapustin Y."/>
            <person name="Meric P."/>
            <person name="Maglott D."/>
            <person name="Birtle Z."/>
            <person name="Marques A.C."/>
            <person name="Graves T."/>
            <person name="Zhou S."/>
            <person name="Teague B."/>
            <person name="Potamousis K."/>
            <person name="Churas C."/>
            <person name="Place M."/>
            <person name="Herschleb J."/>
            <person name="Runnheim R."/>
            <person name="Forrest D."/>
            <person name="Amos-Landgraf J."/>
            <person name="Schwartz D.C."/>
            <person name="Cheng Z."/>
            <person name="Lindblad-Toh K."/>
            <person name="Eichler E.E."/>
            <person name="Ponting C.P."/>
        </authorList>
    </citation>
    <scope>NUCLEOTIDE SEQUENCE [LARGE SCALE GENOMIC DNA]</scope>
    <source>
        <strain>C57BL/6J</strain>
    </source>
</reference>
<reference key="3">
    <citation type="submission" date="2005-07" db="EMBL/GenBank/DDBJ databases">
        <authorList>
            <person name="Mural R.J."/>
            <person name="Adams M.D."/>
            <person name="Myers E.W."/>
            <person name="Smith H.O."/>
            <person name="Venter J.C."/>
        </authorList>
    </citation>
    <scope>NUCLEOTIDE SEQUENCE [LARGE SCALE GENOMIC DNA]</scope>
</reference>
<reference key="4">
    <citation type="journal article" date="2004" name="Genome Res.">
        <title>The status, quality, and expansion of the NIH full-length cDNA project: the Mammalian Gene Collection (MGC).</title>
        <authorList>
            <consortium name="The MGC Project Team"/>
        </authorList>
    </citation>
    <scope>NUCLEOTIDE SEQUENCE [LARGE SCALE MRNA] OF 6-446</scope>
    <source>
        <strain>FVB/N</strain>
        <tissue>Mammary tumor</tissue>
    </source>
</reference>
<reference key="5">
    <citation type="journal article" date="2010" name="Cell">
        <title>A tissue-specific atlas of mouse protein phosphorylation and expression.</title>
        <authorList>
            <person name="Huttlin E.L."/>
            <person name="Jedrychowski M.P."/>
            <person name="Elias J.E."/>
            <person name="Goswami T."/>
            <person name="Rad R."/>
            <person name="Beausoleil S.A."/>
            <person name="Villen J."/>
            <person name="Haas W."/>
            <person name="Sowa M.E."/>
            <person name="Gygi S.P."/>
        </authorList>
    </citation>
    <scope>IDENTIFICATION BY MASS SPECTROMETRY [LARGE SCALE ANALYSIS]</scope>
    <source>
        <tissue>Pancreas</tissue>
        <tissue>Spleen</tissue>
        <tissue>Testis</tissue>
    </source>
</reference>
<proteinExistence type="evidence at protein level"/>
<organism>
    <name type="scientific">Mus musculus</name>
    <name type="common">Mouse</name>
    <dbReference type="NCBI Taxonomy" id="10090"/>
    <lineage>
        <taxon>Eukaryota</taxon>
        <taxon>Metazoa</taxon>
        <taxon>Chordata</taxon>
        <taxon>Craniata</taxon>
        <taxon>Vertebrata</taxon>
        <taxon>Euteleostomi</taxon>
        <taxon>Mammalia</taxon>
        <taxon>Eutheria</taxon>
        <taxon>Euarchontoglires</taxon>
        <taxon>Glires</taxon>
        <taxon>Rodentia</taxon>
        <taxon>Myomorpha</taxon>
        <taxon>Muroidea</taxon>
        <taxon>Muridae</taxon>
        <taxon>Murinae</taxon>
        <taxon>Mus</taxon>
        <taxon>Mus</taxon>
    </lineage>
</organism>
<dbReference type="EMBL" id="AB001539">
    <property type="protein sequence ID" value="BAC66461.1"/>
    <property type="molecule type" value="mRNA"/>
</dbReference>
<dbReference type="EMBL" id="AC149053">
    <property type="status" value="NOT_ANNOTATED_CDS"/>
    <property type="molecule type" value="Genomic_DNA"/>
</dbReference>
<dbReference type="EMBL" id="CH466603">
    <property type="protein sequence ID" value="EDL22902.1"/>
    <property type="molecule type" value="Genomic_DNA"/>
</dbReference>
<dbReference type="EMBL" id="BC008121">
    <property type="protein sequence ID" value="AAH08121.1"/>
    <property type="molecule type" value="mRNA"/>
</dbReference>
<dbReference type="CCDS" id="CCDS21266.2"/>
<dbReference type="RefSeq" id="NP_700468.2">
    <property type="nucleotide sequence ID" value="NM_153419.2"/>
</dbReference>
<dbReference type="SMR" id="Q810D6"/>
<dbReference type="BioGRID" id="221697">
    <property type="interactions" value="2"/>
</dbReference>
<dbReference type="FunCoup" id="Q810D6">
    <property type="interactions" value="2976"/>
</dbReference>
<dbReference type="IntAct" id="Q810D6">
    <property type="interactions" value="1"/>
</dbReference>
<dbReference type="STRING" id="10090.ENSMUSP00000116252"/>
<dbReference type="GlyGen" id="Q810D6">
    <property type="glycosylation" value="1 site, 1 O-linked glycan (1 site)"/>
</dbReference>
<dbReference type="iPTMnet" id="Q810D6"/>
<dbReference type="PhosphoSitePlus" id="Q810D6"/>
<dbReference type="SwissPalm" id="Q810D6"/>
<dbReference type="jPOST" id="Q810D6"/>
<dbReference type="PaxDb" id="10090-ENSMUSP00000116252"/>
<dbReference type="ProteomicsDB" id="271465"/>
<dbReference type="Pumba" id="Q810D6"/>
<dbReference type="Antibodypedia" id="31711">
    <property type="antibodies" value="132 antibodies from 21 providers"/>
</dbReference>
<dbReference type="Ensembl" id="ENSMUST00000107723.9">
    <property type="protein sequence ID" value="ENSMUSP00000103351.3"/>
    <property type="gene ID" value="ENSMUSG00000053801.19"/>
</dbReference>
<dbReference type="Ensembl" id="ENSMUST00000131384.3">
    <property type="protein sequence ID" value="ENSMUSP00000116252.2"/>
    <property type="gene ID" value="ENSMUSG00000053801.19"/>
</dbReference>
<dbReference type="GeneID" id="101612"/>
<dbReference type="KEGG" id="mmu:101612"/>
<dbReference type="UCSC" id="uc009gxj.2">
    <property type="organism name" value="mouse"/>
</dbReference>
<dbReference type="AGR" id="MGI:2141989"/>
<dbReference type="CTD" id="83743"/>
<dbReference type="MGI" id="MGI:2141989">
    <property type="gene designation" value="Grwd1"/>
</dbReference>
<dbReference type="VEuPathDB" id="HostDB:ENSMUSG00000053801"/>
<dbReference type="eggNOG" id="KOG0302">
    <property type="taxonomic scope" value="Eukaryota"/>
</dbReference>
<dbReference type="GeneTree" id="ENSGT00550000075124"/>
<dbReference type="HOGENOM" id="CLU_025272_1_1_1"/>
<dbReference type="InParanoid" id="Q810D6"/>
<dbReference type="OMA" id="RHWKPNA"/>
<dbReference type="OrthoDB" id="2161379at2759"/>
<dbReference type="PhylomeDB" id="Q810D6"/>
<dbReference type="TreeFam" id="TF312982"/>
<dbReference type="BioGRID-ORCS" id="101612">
    <property type="hits" value="31 hits in 82 CRISPR screens"/>
</dbReference>
<dbReference type="PRO" id="PR:Q810D6"/>
<dbReference type="Proteomes" id="UP000000589">
    <property type="component" value="Chromosome 7"/>
</dbReference>
<dbReference type="RNAct" id="Q810D6">
    <property type="molecule type" value="protein"/>
</dbReference>
<dbReference type="Bgee" id="ENSMUSG00000053801">
    <property type="expression patterns" value="Expressed in internal carotid artery and 267 other cell types or tissues"/>
</dbReference>
<dbReference type="ExpressionAtlas" id="Q810D6">
    <property type="expression patterns" value="baseline and differential"/>
</dbReference>
<dbReference type="GO" id="GO:0005694">
    <property type="term" value="C:chromosome"/>
    <property type="evidence" value="ECO:0007669"/>
    <property type="project" value="UniProtKB-SubCell"/>
</dbReference>
<dbReference type="GO" id="GO:0005829">
    <property type="term" value="C:cytosol"/>
    <property type="evidence" value="ECO:0007669"/>
    <property type="project" value="Ensembl"/>
</dbReference>
<dbReference type="GO" id="GO:0005730">
    <property type="term" value="C:nucleolus"/>
    <property type="evidence" value="ECO:0007669"/>
    <property type="project" value="UniProtKB-SubCell"/>
</dbReference>
<dbReference type="GO" id="GO:0005654">
    <property type="term" value="C:nucleoplasm"/>
    <property type="evidence" value="ECO:0007669"/>
    <property type="project" value="Ensembl"/>
</dbReference>
<dbReference type="GO" id="GO:0005634">
    <property type="term" value="C:nucleus"/>
    <property type="evidence" value="ECO:0000250"/>
    <property type="project" value="UniProtKB"/>
</dbReference>
<dbReference type="GO" id="GO:0032991">
    <property type="term" value="C:protein-containing complex"/>
    <property type="evidence" value="ECO:0007669"/>
    <property type="project" value="Ensembl"/>
</dbReference>
<dbReference type="GO" id="GO:0003682">
    <property type="term" value="F:chromatin binding"/>
    <property type="evidence" value="ECO:0000250"/>
    <property type="project" value="UniProtKB"/>
</dbReference>
<dbReference type="GO" id="GO:0003688">
    <property type="term" value="F:DNA replication origin binding"/>
    <property type="evidence" value="ECO:0000250"/>
    <property type="project" value="UniProtKB"/>
</dbReference>
<dbReference type="GO" id="GO:0042393">
    <property type="term" value="F:histone binding"/>
    <property type="evidence" value="ECO:0000250"/>
    <property type="project" value="UniProtKB"/>
</dbReference>
<dbReference type="GO" id="GO:0006260">
    <property type="term" value="P:DNA replication"/>
    <property type="evidence" value="ECO:0000250"/>
    <property type="project" value="UniProtKB"/>
</dbReference>
<dbReference type="GO" id="GO:0006334">
    <property type="term" value="P:nucleosome assembly"/>
    <property type="evidence" value="ECO:0000250"/>
    <property type="project" value="UniProtKB"/>
</dbReference>
<dbReference type="GO" id="GO:0006337">
    <property type="term" value="P:nucleosome disassembly"/>
    <property type="evidence" value="ECO:0000250"/>
    <property type="project" value="UniProtKB"/>
</dbReference>
<dbReference type="FunFam" id="2.130.10.10:FF:000332">
    <property type="entry name" value="glutamate-rich WD repeat-containing protein 1"/>
    <property type="match status" value="1"/>
</dbReference>
<dbReference type="Gene3D" id="2.130.10.10">
    <property type="entry name" value="YVTN repeat-like/Quinoprotein amine dehydrogenase"/>
    <property type="match status" value="1"/>
</dbReference>
<dbReference type="InterPro" id="IPR020472">
    <property type="entry name" value="G-protein_beta_WD-40_rep"/>
</dbReference>
<dbReference type="InterPro" id="IPR051972">
    <property type="entry name" value="Glutamate-rich_WD_repeat"/>
</dbReference>
<dbReference type="InterPro" id="IPR022052">
    <property type="entry name" value="Histone-bd_RBBP4-like_N"/>
</dbReference>
<dbReference type="InterPro" id="IPR015943">
    <property type="entry name" value="WD40/YVTN_repeat-like_dom_sf"/>
</dbReference>
<dbReference type="InterPro" id="IPR019775">
    <property type="entry name" value="WD40_repeat_CS"/>
</dbReference>
<dbReference type="InterPro" id="IPR036322">
    <property type="entry name" value="WD40_repeat_dom_sf"/>
</dbReference>
<dbReference type="InterPro" id="IPR001680">
    <property type="entry name" value="WD40_rpt"/>
</dbReference>
<dbReference type="PANTHER" id="PTHR45903">
    <property type="entry name" value="GLUTAMATE-RICH WD REPEAT-CONTAINING PROTEIN 1"/>
    <property type="match status" value="1"/>
</dbReference>
<dbReference type="PANTHER" id="PTHR45903:SF1">
    <property type="entry name" value="GLUTAMATE-RICH WD REPEAT-CONTAINING PROTEIN 1"/>
    <property type="match status" value="1"/>
</dbReference>
<dbReference type="Pfam" id="PF12265">
    <property type="entry name" value="CAF1C_H4-bd"/>
    <property type="match status" value="1"/>
</dbReference>
<dbReference type="Pfam" id="PF00400">
    <property type="entry name" value="WD40"/>
    <property type="match status" value="3"/>
</dbReference>
<dbReference type="PRINTS" id="PR00320">
    <property type="entry name" value="GPROTEINBRPT"/>
</dbReference>
<dbReference type="SMART" id="SM00320">
    <property type="entry name" value="WD40"/>
    <property type="match status" value="4"/>
</dbReference>
<dbReference type="SUPFAM" id="SSF50978">
    <property type="entry name" value="WD40 repeat-like"/>
    <property type="match status" value="1"/>
</dbReference>
<dbReference type="PROSITE" id="PS00678">
    <property type="entry name" value="WD_REPEATS_1"/>
    <property type="match status" value="1"/>
</dbReference>
<dbReference type="PROSITE" id="PS50082">
    <property type="entry name" value="WD_REPEATS_2"/>
    <property type="match status" value="3"/>
</dbReference>
<dbReference type="PROSITE" id="PS50294">
    <property type="entry name" value="WD_REPEATS_REGION"/>
    <property type="match status" value="1"/>
</dbReference>
<keyword id="KW-0158">Chromosome</keyword>
<keyword id="KW-0539">Nucleus</keyword>
<keyword id="KW-0597">Phosphoprotein</keyword>
<keyword id="KW-1185">Reference proteome</keyword>
<keyword id="KW-0677">Repeat</keyword>
<keyword id="KW-0853">WD repeat</keyword>
<name>GRWD1_MOUSE</name>
<sequence length="446" mass="49224">MAARKGRSRTCETGEPMEAETCDPGTEGPSQVYLPGRGPPLSEGEELVMDEEAYVLYHRAQTGAPCLSFDIVRDHLGDNRTELPLSLYLCAGTQAESAQSNRLMMLRMHNLHGTRPSPSEGSDDDEEDEDEEDEEEQKPQLELAMVPHYGGINRVRVSWLGEEPVAGVWSEKGQVEVFALRRLLQVVDDPQALAIFLRDEQARIKPIFSFAGHMGEGFALDWSPRVPGRLLTGDCQKNVHLWTPTEGGSWNVDQRPFVGHTRSVEDLQWSPTEDTVFASCSADASIRIWDIRAAPGKACMLTTATAHDGDVNVISWSRREPFLLSGGDDGALKVWDLRQFKSGSPVATFKQHMAPVTSVEWHPQDSGVFAASGADNQITQWDLAVERDPESGETETDPGLAALPQQLLFVHQGETDLKELHWHPQCPGVLISTALSGFTVFRTISV</sequence>
<gene>
    <name type="primary">Grwd1</name>
    <name type="synonym">A301</name>
</gene>
<accession>Q810D6</accession>
<accession>G3UVT6</accession>
<accession>Q922H3</accession>
<protein>
    <recommendedName>
        <fullName>Glutamate-rich WD repeat-containing protein 1</fullName>
    </recommendedName>
    <alternativeName>
        <fullName>Protein A301</fullName>
    </alternativeName>
</protein>